<comment type="function">
    <text evidence="1">Allows the formation of correctly charged Gln-tRNA(Gln) through the transamidation of misacylated Glu-tRNA(Gln) in organisms which lack glutaminyl-tRNA synthetase. The reaction takes place in the presence of glutamine and ATP through an activated gamma-phospho-Glu-tRNA(Gln).</text>
</comment>
<comment type="catalytic activity">
    <reaction evidence="1">
        <text>L-glutamyl-tRNA(Gln) + L-glutamine + ATP + H2O = L-glutaminyl-tRNA(Gln) + L-glutamate + ADP + phosphate + H(+)</text>
        <dbReference type="Rhea" id="RHEA:17521"/>
        <dbReference type="Rhea" id="RHEA-COMP:9681"/>
        <dbReference type="Rhea" id="RHEA-COMP:9684"/>
        <dbReference type="ChEBI" id="CHEBI:15377"/>
        <dbReference type="ChEBI" id="CHEBI:15378"/>
        <dbReference type="ChEBI" id="CHEBI:29985"/>
        <dbReference type="ChEBI" id="CHEBI:30616"/>
        <dbReference type="ChEBI" id="CHEBI:43474"/>
        <dbReference type="ChEBI" id="CHEBI:58359"/>
        <dbReference type="ChEBI" id="CHEBI:78520"/>
        <dbReference type="ChEBI" id="CHEBI:78521"/>
        <dbReference type="ChEBI" id="CHEBI:456216"/>
        <dbReference type="EC" id="6.3.5.7"/>
    </reaction>
</comment>
<comment type="subunit">
    <text evidence="1">Heterotrimer of A, B and C subunits.</text>
</comment>
<comment type="similarity">
    <text evidence="1">Belongs to the amidase family. GatA subfamily.</text>
</comment>
<organism>
    <name type="scientific">Staphylococcus aureus (strain MRSA252)</name>
    <dbReference type="NCBI Taxonomy" id="282458"/>
    <lineage>
        <taxon>Bacteria</taxon>
        <taxon>Bacillati</taxon>
        <taxon>Bacillota</taxon>
        <taxon>Bacilli</taxon>
        <taxon>Bacillales</taxon>
        <taxon>Staphylococcaceae</taxon>
        <taxon>Staphylococcus</taxon>
    </lineage>
</organism>
<keyword id="KW-0067">ATP-binding</keyword>
<keyword id="KW-0436">Ligase</keyword>
<keyword id="KW-0547">Nucleotide-binding</keyword>
<keyword id="KW-0648">Protein biosynthesis</keyword>
<feature type="chain" id="PRO_0000105201" description="Glutamyl-tRNA(Gln) amidotransferase subunit A">
    <location>
        <begin position="1"/>
        <end position="485"/>
    </location>
</feature>
<feature type="active site" description="Charge relay system" evidence="1">
    <location>
        <position position="79"/>
    </location>
</feature>
<feature type="active site" description="Charge relay system" evidence="1">
    <location>
        <position position="154"/>
    </location>
</feature>
<feature type="active site" description="Acyl-ester intermediate" evidence="1">
    <location>
        <position position="178"/>
    </location>
</feature>
<evidence type="ECO:0000255" key="1">
    <source>
        <dbReference type="HAMAP-Rule" id="MF_00120"/>
    </source>
</evidence>
<protein>
    <recommendedName>
        <fullName evidence="1">Glutamyl-tRNA(Gln) amidotransferase subunit A</fullName>
        <shortName evidence="1">Glu-ADT subunit A</shortName>
        <ecNumber evidence="1">6.3.5.7</ecNumber>
    </recommendedName>
</protein>
<sequence length="485" mass="52793">MSIRYESVENLLTLIKDKKIKPSDVVKDIYDAIEETDPTIKSFLALDKENAIKKAQELDELQAKDQMDGKLFGIPMGIKDNIITNGLETTCASKMLEGFVPIYESTVMEKLHNENAVLIGKLNMDEFAMGGSTETSYFKKTVNPFDHKAVPGGSSGGSAAAVAAGLVPFSLGSDTGGSIRQPAAYCGVVGMKPTYGRVSRFGLVAFASSLDQIGPLTRNVKDNAIVLEAISGADANDSTSAPVDDVDFTSEIGKDIKGLKVALPKEYLGEGVADDVKEAVQNAVETLKSLGAVVEEVSLPNTKFGIPSYYVIASSEASSNLSRFDGIRYGYHSKEAHSLEELYKMSRSEGFGKEVKRRIFLGTFALSSGYYDAYYKKSQKVRTLIKNDFDKVFENYDVVVGPTAPTTAFNLGEEIDDPLTMYANDLLTTPVNLAGLPGISVPCGQSNGRPIGLQFIGKPFDEKTLYRVAYQYETQYNLHDVYEKL</sequence>
<gene>
    <name evidence="1" type="primary">gatA</name>
    <name type="ordered locus">SAR1992</name>
</gene>
<dbReference type="EC" id="6.3.5.7" evidence="1"/>
<dbReference type="EMBL" id="BX571856">
    <property type="protein sequence ID" value="CAG40977.1"/>
    <property type="molecule type" value="Genomic_DNA"/>
</dbReference>
<dbReference type="RefSeq" id="WP_000027924.1">
    <property type="nucleotide sequence ID" value="NC_002952.2"/>
</dbReference>
<dbReference type="SMR" id="Q6GFF7"/>
<dbReference type="KEGG" id="sar:SAR1992"/>
<dbReference type="HOGENOM" id="CLU_009600_0_3_9"/>
<dbReference type="Proteomes" id="UP000000596">
    <property type="component" value="Chromosome"/>
</dbReference>
<dbReference type="GO" id="GO:0030956">
    <property type="term" value="C:glutamyl-tRNA(Gln) amidotransferase complex"/>
    <property type="evidence" value="ECO:0007669"/>
    <property type="project" value="InterPro"/>
</dbReference>
<dbReference type="GO" id="GO:0005524">
    <property type="term" value="F:ATP binding"/>
    <property type="evidence" value="ECO:0007669"/>
    <property type="project" value="UniProtKB-KW"/>
</dbReference>
<dbReference type="GO" id="GO:0050567">
    <property type="term" value="F:glutaminyl-tRNA synthase (glutamine-hydrolyzing) activity"/>
    <property type="evidence" value="ECO:0007669"/>
    <property type="project" value="UniProtKB-UniRule"/>
</dbReference>
<dbReference type="GO" id="GO:0006412">
    <property type="term" value="P:translation"/>
    <property type="evidence" value="ECO:0007669"/>
    <property type="project" value="UniProtKB-UniRule"/>
</dbReference>
<dbReference type="Gene3D" id="3.90.1300.10">
    <property type="entry name" value="Amidase signature (AS) domain"/>
    <property type="match status" value="1"/>
</dbReference>
<dbReference type="HAMAP" id="MF_00120">
    <property type="entry name" value="GatA"/>
    <property type="match status" value="1"/>
</dbReference>
<dbReference type="InterPro" id="IPR000120">
    <property type="entry name" value="Amidase"/>
</dbReference>
<dbReference type="InterPro" id="IPR020556">
    <property type="entry name" value="Amidase_CS"/>
</dbReference>
<dbReference type="InterPro" id="IPR023631">
    <property type="entry name" value="Amidase_dom"/>
</dbReference>
<dbReference type="InterPro" id="IPR036928">
    <property type="entry name" value="AS_sf"/>
</dbReference>
<dbReference type="InterPro" id="IPR004412">
    <property type="entry name" value="GatA"/>
</dbReference>
<dbReference type="NCBIfam" id="TIGR00132">
    <property type="entry name" value="gatA"/>
    <property type="match status" value="1"/>
</dbReference>
<dbReference type="PANTHER" id="PTHR11895:SF151">
    <property type="entry name" value="GLUTAMYL-TRNA(GLN) AMIDOTRANSFERASE SUBUNIT A"/>
    <property type="match status" value="1"/>
</dbReference>
<dbReference type="PANTHER" id="PTHR11895">
    <property type="entry name" value="TRANSAMIDASE"/>
    <property type="match status" value="1"/>
</dbReference>
<dbReference type="Pfam" id="PF01425">
    <property type="entry name" value="Amidase"/>
    <property type="match status" value="1"/>
</dbReference>
<dbReference type="SUPFAM" id="SSF75304">
    <property type="entry name" value="Amidase signature (AS) enzymes"/>
    <property type="match status" value="1"/>
</dbReference>
<dbReference type="PROSITE" id="PS00571">
    <property type="entry name" value="AMIDASES"/>
    <property type="match status" value="1"/>
</dbReference>
<name>GATA_STAAR</name>
<proteinExistence type="inferred from homology"/>
<accession>Q6GFF7</accession>
<reference key="1">
    <citation type="journal article" date="2004" name="Proc. Natl. Acad. Sci. U.S.A.">
        <title>Complete genomes of two clinical Staphylococcus aureus strains: evidence for the rapid evolution of virulence and drug resistance.</title>
        <authorList>
            <person name="Holden M.T.G."/>
            <person name="Feil E.J."/>
            <person name="Lindsay J.A."/>
            <person name="Peacock S.J."/>
            <person name="Day N.P.J."/>
            <person name="Enright M.C."/>
            <person name="Foster T.J."/>
            <person name="Moore C.E."/>
            <person name="Hurst L."/>
            <person name="Atkin R."/>
            <person name="Barron A."/>
            <person name="Bason N."/>
            <person name="Bentley S.D."/>
            <person name="Chillingworth C."/>
            <person name="Chillingworth T."/>
            <person name="Churcher C."/>
            <person name="Clark L."/>
            <person name="Corton C."/>
            <person name="Cronin A."/>
            <person name="Doggett J."/>
            <person name="Dowd L."/>
            <person name="Feltwell T."/>
            <person name="Hance Z."/>
            <person name="Harris B."/>
            <person name="Hauser H."/>
            <person name="Holroyd S."/>
            <person name="Jagels K."/>
            <person name="James K.D."/>
            <person name="Lennard N."/>
            <person name="Line A."/>
            <person name="Mayes R."/>
            <person name="Moule S."/>
            <person name="Mungall K."/>
            <person name="Ormond D."/>
            <person name="Quail M.A."/>
            <person name="Rabbinowitsch E."/>
            <person name="Rutherford K.M."/>
            <person name="Sanders M."/>
            <person name="Sharp S."/>
            <person name="Simmonds M."/>
            <person name="Stevens K."/>
            <person name="Whitehead S."/>
            <person name="Barrell B.G."/>
            <person name="Spratt B.G."/>
            <person name="Parkhill J."/>
        </authorList>
    </citation>
    <scope>NUCLEOTIDE SEQUENCE [LARGE SCALE GENOMIC DNA]</scope>
    <source>
        <strain>MRSA252</strain>
    </source>
</reference>